<name>CRY2_TITSE</name>
<accession>P0DRD9</accession>
<comment type="subcellular location">
    <subcellularLocation>
        <location evidence="1">Secreted</location>
    </subcellularLocation>
</comment>
<comment type="tissue specificity">
    <text evidence="3">Expressed by the venom gland.</text>
</comment>
<organism>
    <name type="scientific">Tityus serrulatus</name>
    <name type="common">Brazilian scorpion</name>
    <dbReference type="NCBI Taxonomy" id="6887"/>
    <lineage>
        <taxon>Eukaryota</taxon>
        <taxon>Metazoa</taxon>
        <taxon>Ecdysozoa</taxon>
        <taxon>Arthropoda</taxon>
        <taxon>Chelicerata</taxon>
        <taxon>Arachnida</taxon>
        <taxon>Scorpiones</taxon>
        <taxon>Buthida</taxon>
        <taxon>Buthoidea</taxon>
        <taxon>Buthidae</taxon>
        <taxon>Tityus</taxon>
    </lineage>
</organism>
<reference key="1">
    <citation type="journal article" date="2024" name="J. Nat. Prod.">
        <title>Profiling the linear peptides of venom from the Brazilian scorpion Tityus serrulatus: structural and functional characterization.</title>
        <authorList>
            <person name="Dias N.B."/>
            <person name="de Souza B.M."/>
            <person name="Cid-Alda F."/>
            <person name="Dorce V.A.C."/>
            <person name="Cocchi F.K."/>
            <person name="Palma M.S."/>
        </authorList>
    </citation>
    <scope>PROTEIN SEQUENCE</scope>
    <scope>IDENTIFICATION BY MASS SPECTROMETRY</scope>
    <scope>SUBCELLULAR LOCATION</scope>
    <source>
        <tissue>Venom</tissue>
    </source>
</reference>
<protein>
    <recommendedName>
        <fullName evidence="2">Cryptide TyPep-2</fullName>
    </recommendedName>
</protein>
<feature type="peptide" id="PRO_0000461729" description="Cryptide TyPep-2" evidence="1">
    <location>
        <begin position="1"/>
        <end position="19"/>
    </location>
</feature>
<proteinExistence type="evidence at protein level"/>
<keyword id="KW-0903">Direct protein sequencing</keyword>
<keyword id="KW-0964">Secreted</keyword>
<dbReference type="GO" id="GO:0005576">
    <property type="term" value="C:extracellular region"/>
    <property type="evidence" value="ECO:0007669"/>
    <property type="project" value="UniProtKB-SubCell"/>
</dbReference>
<sequence length="19" mass="1760">GCDALLSGDHGGLISANGC</sequence>
<evidence type="ECO:0000269" key="1">
    <source>
    </source>
</evidence>
<evidence type="ECO:0000303" key="2">
    <source>
    </source>
</evidence>
<evidence type="ECO:0000305" key="3">
    <source>
    </source>
</evidence>